<gene>
    <name type="ordered locus">RPE_4771</name>
</gene>
<protein>
    <recommendedName>
        <fullName evidence="1">Probable transcriptional regulatory protein RPE_4771</fullName>
    </recommendedName>
</protein>
<keyword id="KW-0963">Cytoplasm</keyword>
<keyword id="KW-0238">DNA-binding</keyword>
<keyword id="KW-0804">Transcription</keyword>
<keyword id="KW-0805">Transcription regulation</keyword>
<reference key="1">
    <citation type="submission" date="2006-09" db="EMBL/GenBank/DDBJ databases">
        <title>Complete sequence of Rhodopseudomonas palustris BisA53.</title>
        <authorList>
            <consortium name="US DOE Joint Genome Institute"/>
            <person name="Copeland A."/>
            <person name="Lucas S."/>
            <person name="Lapidus A."/>
            <person name="Barry K."/>
            <person name="Detter J.C."/>
            <person name="Glavina del Rio T."/>
            <person name="Hammon N."/>
            <person name="Israni S."/>
            <person name="Dalin E."/>
            <person name="Tice H."/>
            <person name="Pitluck S."/>
            <person name="Chain P."/>
            <person name="Malfatti S."/>
            <person name="Shin M."/>
            <person name="Vergez L."/>
            <person name="Schmutz J."/>
            <person name="Larimer F."/>
            <person name="Land M."/>
            <person name="Hauser L."/>
            <person name="Pelletier D.A."/>
            <person name="Kyrpides N."/>
            <person name="Kim E."/>
            <person name="Harwood C.S."/>
            <person name="Oda Y."/>
            <person name="Richardson P."/>
        </authorList>
    </citation>
    <scope>NUCLEOTIDE SEQUENCE [LARGE SCALE GENOMIC DNA]</scope>
    <source>
        <strain>BisA53</strain>
    </source>
</reference>
<dbReference type="EMBL" id="CP000463">
    <property type="protein sequence ID" value="ABJ08690.1"/>
    <property type="molecule type" value="Genomic_DNA"/>
</dbReference>
<dbReference type="SMR" id="Q07H94"/>
<dbReference type="STRING" id="316055.RPE_4771"/>
<dbReference type="KEGG" id="rpe:RPE_4771"/>
<dbReference type="eggNOG" id="COG0217">
    <property type="taxonomic scope" value="Bacteria"/>
</dbReference>
<dbReference type="HOGENOM" id="CLU_062974_2_2_5"/>
<dbReference type="OrthoDB" id="9781053at2"/>
<dbReference type="GO" id="GO:0005829">
    <property type="term" value="C:cytosol"/>
    <property type="evidence" value="ECO:0007669"/>
    <property type="project" value="TreeGrafter"/>
</dbReference>
<dbReference type="GO" id="GO:0003677">
    <property type="term" value="F:DNA binding"/>
    <property type="evidence" value="ECO:0007669"/>
    <property type="project" value="UniProtKB-UniRule"/>
</dbReference>
<dbReference type="GO" id="GO:0006355">
    <property type="term" value="P:regulation of DNA-templated transcription"/>
    <property type="evidence" value="ECO:0007669"/>
    <property type="project" value="UniProtKB-UniRule"/>
</dbReference>
<dbReference type="FunFam" id="1.10.10.200:FF:000002">
    <property type="entry name" value="Probable transcriptional regulatory protein CLM62_37755"/>
    <property type="match status" value="1"/>
</dbReference>
<dbReference type="Gene3D" id="1.10.10.200">
    <property type="match status" value="1"/>
</dbReference>
<dbReference type="Gene3D" id="3.30.70.980">
    <property type="match status" value="2"/>
</dbReference>
<dbReference type="HAMAP" id="MF_00693">
    <property type="entry name" value="Transcrip_reg_TACO1"/>
    <property type="match status" value="1"/>
</dbReference>
<dbReference type="InterPro" id="IPR017856">
    <property type="entry name" value="Integrase-like_N"/>
</dbReference>
<dbReference type="InterPro" id="IPR048300">
    <property type="entry name" value="TACO1_YebC-like_2nd/3rd_dom"/>
</dbReference>
<dbReference type="InterPro" id="IPR049083">
    <property type="entry name" value="TACO1_YebC_N"/>
</dbReference>
<dbReference type="InterPro" id="IPR002876">
    <property type="entry name" value="Transcrip_reg_TACO1-like"/>
</dbReference>
<dbReference type="InterPro" id="IPR026564">
    <property type="entry name" value="Transcrip_reg_TACO1-like_dom3"/>
</dbReference>
<dbReference type="InterPro" id="IPR029072">
    <property type="entry name" value="YebC-like"/>
</dbReference>
<dbReference type="NCBIfam" id="NF001030">
    <property type="entry name" value="PRK00110.1"/>
    <property type="match status" value="1"/>
</dbReference>
<dbReference type="NCBIfam" id="NF009044">
    <property type="entry name" value="PRK12378.1"/>
    <property type="match status" value="1"/>
</dbReference>
<dbReference type="NCBIfam" id="TIGR01033">
    <property type="entry name" value="YebC/PmpR family DNA-binding transcriptional regulator"/>
    <property type="match status" value="1"/>
</dbReference>
<dbReference type="PANTHER" id="PTHR12532:SF6">
    <property type="entry name" value="TRANSCRIPTIONAL REGULATORY PROTEIN YEBC-RELATED"/>
    <property type="match status" value="1"/>
</dbReference>
<dbReference type="PANTHER" id="PTHR12532">
    <property type="entry name" value="TRANSLATIONAL ACTIVATOR OF CYTOCHROME C OXIDASE 1"/>
    <property type="match status" value="1"/>
</dbReference>
<dbReference type="Pfam" id="PF20772">
    <property type="entry name" value="TACO1_YebC_N"/>
    <property type="match status" value="1"/>
</dbReference>
<dbReference type="Pfam" id="PF01709">
    <property type="entry name" value="Transcrip_reg"/>
    <property type="match status" value="1"/>
</dbReference>
<dbReference type="SUPFAM" id="SSF75625">
    <property type="entry name" value="YebC-like"/>
    <property type="match status" value="1"/>
</dbReference>
<feature type="chain" id="PRO_1000045361" description="Probable transcriptional regulatory protein RPE_4771">
    <location>
        <begin position="1"/>
        <end position="248"/>
    </location>
</feature>
<feature type="region of interest" description="Disordered" evidence="2">
    <location>
        <begin position="1"/>
        <end position="21"/>
    </location>
</feature>
<organism>
    <name type="scientific">Rhodopseudomonas palustris (strain BisA53)</name>
    <dbReference type="NCBI Taxonomy" id="316055"/>
    <lineage>
        <taxon>Bacteria</taxon>
        <taxon>Pseudomonadati</taxon>
        <taxon>Pseudomonadota</taxon>
        <taxon>Alphaproteobacteria</taxon>
        <taxon>Hyphomicrobiales</taxon>
        <taxon>Nitrobacteraceae</taxon>
        <taxon>Rhodopseudomonas</taxon>
    </lineage>
</organism>
<sequence length="248" mass="26879">MAGHSQFKNIMHRKGRQDAQKSKLFSKLAREITVAAKLGAPDPAMNARLRSAIIAARQENMPKDNIERAIKKAIGSDGDNYDEMRYEGYGPGGVAVIVEALTDNRNRAASDIRSYFTKSGGNLGETGSVAFMFDHTGLIEYDAGVASADDVLDAAIEAGADDVLSSDTGHEVYASHDTFREVAKALEAKFGEARKAALIWKPQNTVPVDDETGEKLLKLIDLLNEHDDVQNVYANFEISDALMAKMGG</sequence>
<evidence type="ECO:0000255" key="1">
    <source>
        <dbReference type="HAMAP-Rule" id="MF_00693"/>
    </source>
</evidence>
<evidence type="ECO:0000256" key="2">
    <source>
        <dbReference type="SAM" id="MobiDB-lite"/>
    </source>
</evidence>
<comment type="subcellular location">
    <subcellularLocation>
        <location evidence="1">Cytoplasm</location>
    </subcellularLocation>
</comment>
<comment type="similarity">
    <text evidence="1">Belongs to the TACO1 family.</text>
</comment>
<proteinExistence type="inferred from homology"/>
<accession>Q07H94</accession>
<name>Y4771_RHOP5</name>